<organism>
    <name type="scientific">Pseudothermotoga lettingae (strain ATCC BAA-301 / DSM 14385 / NBRC 107922 / TMO)</name>
    <name type="common">Thermotoga lettingae</name>
    <dbReference type="NCBI Taxonomy" id="416591"/>
    <lineage>
        <taxon>Bacteria</taxon>
        <taxon>Thermotogati</taxon>
        <taxon>Thermotogota</taxon>
        <taxon>Thermotogae</taxon>
        <taxon>Thermotogales</taxon>
        <taxon>Thermotogaceae</taxon>
        <taxon>Pseudothermotoga</taxon>
    </lineage>
</organism>
<comment type="function">
    <text evidence="1">The RuvA-RuvB-RuvC complex processes Holliday junction (HJ) DNA during genetic recombination and DNA repair, while the RuvA-RuvB complex plays an important role in the rescue of blocked DNA replication forks via replication fork reversal (RFR). RuvA specifically binds to HJ cruciform DNA, conferring on it an open structure. The RuvB hexamer acts as an ATP-dependent pump, pulling dsDNA into and through the RuvAB complex. RuvB forms 2 homohexamers on either side of HJ DNA bound by 1 or 2 RuvA tetramers; 4 subunits per hexamer contact DNA at a time. Coordinated motions by a converter formed by DNA-disengaged RuvB subunits stimulates ATP hydrolysis and nucleotide exchange. Immobilization of the converter enables RuvB to convert the ATP-contained energy into a lever motion, pulling 2 nucleotides of DNA out of the RuvA tetramer per ATP hydrolyzed, thus driving DNA branch migration. The RuvB motors rotate together with the DNA substrate, which together with the progressing nucleotide cycle form the mechanistic basis for DNA recombination by continuous HJ branch migration. Branch migration allows RuvC to scan DNA until it finds its consensus sequence, where it cleaves and resolves cruciform DNA.</text>
</comment>
<comment type="catalytic activity">
    <reaction evidence="1">
        <text>ATP + H2O = ADP + phosphate + H(+)</text>
        <dbReference type="Rhea" id="RHEA:13065"/>
        <dbReference type="ChEBI" id="CHEBI:15377"/>
        <dbReference type="ChEBI" id="CHEBI:15378"/>
        <dbReference type="ChEBI" id="CHEBI:30616"/>
        <dbReference type="ChEBI" id="CHEBI:43474"/>
        <dbReference type="ChEBI" id="CHEBI:456216"/>
    </reaction>
</comment>
<comment type="subunit">
    <text evidence="1">Homohexamer. Forms an RuvA(8)-RuvB(12)-Holliday junction (HJ) complex. HJ DNA is sandwiched between 2 RuvA tetramers; dsDNA enters through RuvA and exits via RuvB. An RuvB hexamer assembles on each DNA strand where it exits the tetramer. Each RuvB hexamer is contacted by two RuvA subunits (via domain III) on 2 adjacent RuvB subunits; this complex drives branch migration. In the full resolvosome a probable DNA-RuvA(4)-RuvB(12)-RuvC(2) complex forms which resolves the HJ.</text>
</comment>
<comment type="subcellular location">
    <subcellularLocation>
        <location evidence="1">Cytoplasm</location>
    </subcellularLocation>
</comment>
<comment type="domain">
    <text evidence="1">Has 3 domains, the large (RuvB-L) and small ATPase (RuvB-S) domains and the C-terminal head (RuvB-H) domain. The head domain binds DNA, while the ATPase domains jointly bind ATP, ADP or are empty depending on the state of the subunit in the translocation cycle. During a single DNA translocation step the structure of each domain remains the same, but their relative positions change.</text>
</comment>
<comment type="similarity">
    <text evidence="1">Belongs to the RuvB family.</text>
</comment>
<feature type="chain" id="PRO_0000322849" description="Holliday junction branch migration complex subunit RuvB">
    <location>
        <begin position="1"/>
        <end position="343"/>
    </location>
</feature>
<feature type="region of interest" description="Large ATPase domain (RuvB-L)" evidence="1">
    <location>
        <begin position="1"/>
        <end position="178"/>
    </location>
</feature>
<feature type="region of interest" description="Small ATPAse domain (RuvB-S)" evidence="1">
    <location>
        <begin position="179"/>
        <end position="249"/>
    </location>
</feature>
<feature type="region of interest" description="Head domain (RuvB-H)" evidence="1">
    <location>
        <begin position="252"/>
        <end position="343"/>
    </location>
</feature>
<feature type="binding site" evidence="1">
    <location>
        <position position="17"/>
    </location>
    <ligand>
        <name>ATP</name>
        <dbReference type="ChEBI" id="CHEBI:30616"/>
    </ligand>
</feature>
<feature type="binding site" evidence="1">
    <location>
        <position position="18"/>
    </location>
    <ligand>
        <name>ATP</name>
        <dbReference type="ChEBI" id="CHEBI:30616"/>
    </ligand>
</feature>
<feature type="binding site" evidence="1">
    <location>
        <position position="59"/>
    </location>
    <ligand>
        <name>ATP</name>
        <dbReference type="ChEBI" id="CHEBI:30616"/>
    </ligand>
</feature>
<feature type="binding site" evidence="1">
    <location>
        <position position="62"/>
    </location>
    <ligand>
        <name>ATP</name>
        <dbReference type="ChEBI" id="CHEBI:30616"/>
    </ligand>
</feature>
<feature type="binding site" evidence="1">
    <location>
        <position position="63"/>
    </location>
    <ligand>
        <name>ATP</name>
        <dbReference type="ChEBI" id="CHEBI:30616"/>
    </ligand>
</feature>
<feature type="binding site" evidence="1">
    <location>
        <position position="63"/>
    </location>
    <ligand>
        <name>Mg(2+)</name>
        <dbReference type="ChEBI" id="CHEBI:18420"/>
    </ligand>
</feature>
<feature type="binding site" evidence="1">
    <location>
        <position position="64"/>
    </location>
    <ligand>
        <name>ATP</name>
        <dbReference type="ChEBI" id="CHEBI:30616"/>
    </ligand>
</feature>
<feature type="binding site" evidence="1">
    <location>
        <begin position="125"/>
        <end position="127"/>
    </location>
    <ligand>
        <name>ATP</name>
        <dbReference type="ChEBI" id="CHEBI:30616"/>
    </ligand>
</feature>
<feature type="binding site" evidence="1">
    <location>
        <position position="168"/>
    </location>
    <ligand>
        <name>ATP</name>
        <dbReference type="ChEBI" id="CHEBI:30616"/>
    </ligand>
</feature>
<feature type="binding site" evidence="1">
    <location>
        <position position="178"/>
    </location>
    <ligand>
        <name>ATP</name>
        <dbReference type="ChEBI" id="CHEBI:30616"/>
    </ligand>
</feature>
<feature type="binding site" evidence="1">
    <location>
        <position position="215"/>
    </location>
    <ligand>
        <name>ATP</name>
        <dbReference type="ChEBI" id="CHEBI:30616"/>
    </ligand>
</feature>
<feature type="binding site" evidence="1">
    <location>
        <position position="307"/>
    </location>
    <ligand>
        <name>DNA</name>
        <dbReference type="ChEBI" id="CHEBI:16991"/>
    </ligand>
</feature>
<feature type="binding site" evidence="1">
    <location>
        <position position="312"/>
    </location>
    <ligand>
        <name>DNA</name>
        <dbReference type="ChEBI" id="CHEBI:16991"/>
    </ligand>
</feature>
<sequence>MNFVQQNREGDAILVSLRPDTLEDYIGQEEVKKKLYIAMKAAKLRNEPLDHILFSGPPGLGKTTLAFVIAKEMGKNIHITSGPVLERQGDIAAILSSIEEGDILFIDEIHRINKAVEEVFYSALEDYKVDIMIGKGPTARSIRIGLKPFTLVGATTRSGLLSSPLRNRFGMILELQFYTVKELMEIIKRACKIMNIEIEESAAQLIASRARGTPRIALRLLKRVRDVATIRKENKIISHLVEKTMDILEIDKLGLDEMDRKILRTLIEIYDGGPVGIEALAATLNLEIDTLKEIHEPYLLQQGLIIRTPRGRVATGIAYEHLGYPSKISGGLFDESLRKSDES</sequence>
<evidence type="ECO:0000255" key="1">
    <source>
        <dbReference type="HAMAP-Rule" id="MF_00016"/>
    </source>
</evidence>
<gene>
    <name evidence="1" type="primary">ruvB</name>
    <name type="ordered locus">Tlet_0928</name>
</gene>
<reference key="1">
    <citation type="submission" date="2007-08" db="EMBL/GenBank/DDBJ databases">
        <title>Complete sequence of Thermotoga lettingae TMO.</title>
        <authorList>
            <consortium name="US DOE Joint Genome Institute"/>
            <person name="Copeland A."/>
            <person name="Lucas S."/>
            <person name="Lapidus A."/>
            <person name="Barry K."/>
            <person name="Glavina del Rio T."/>
            <person name="Dalin E."/>
            <person name="Tice H."/>
            <person name="Pitluck S."/>
            <person name="Foster B."/>
            <person name="Bruce D."/>
            <person name="Schmutz J."/>
            <person name="Larimer F."/>
            <person name="Land M."/>
            <person name="Hauser L."/>
            <person name="Kyrpides N."/>
            <person name="Mikhailova N."/>
            <person name="Nelson K."/>
            <person name="Gogarten J.P."/>
            <person name="Noll K."/>
            <person name="Richardson P."/>
        </authorList>
    </citation>
    <scope>NUCLEOTIDE SEQUENCE [LARGE SCALE GENOMIC DNA]</scope>
    <source>
        <strain>ATCC BAA-301 / DSM 14385 / NBRC 107922 / TMO</strain>
    </source>
</reference>
<dbReference type="EC" id="3.6.4.-" evidence="1"/>
<dbReference type="EMBL" id="CP000812">
    <property type="protein sequence ID" value="ABV33494.1"/>
    <property type="molecule type" value="Genomic_DNA"/>
</dbReference>
<dbReference type="RefSeq" id="WP_012002975.1">
    <property type="nucleotide sequence ID" value="NZ_BSDV01000001.1"/>
</dbReference>
<dbReference type="SMR" id="A8F5R0"/>
<dbReference type="STRING" id="416591.Tlet_0928"/>
<dbReference type="KEGG" id="tle:Tlet_0928"/>
<dbReference type="eggNOG" id="COG2255">
    <property type="taxonomic scope" value="Bacteria"/>
</dbReference>
<dbReference type="HOGENOM" id="CLU_055599_1_0_0"/>
<dbReference type="OrthoDB" id="9804478at2"/>
<dbReference type="Proteomes" id="UP000002016">
    <property type="component" value="Chromosome"/>
</dbReference>
<dbReference type="GO" id="GO:0005737">
    <property type="term" value="C:cytoplasm"/>
    <property type="evidence" value="ECO:0007669"/>
    <property type="project" value="UniProtKB-SubCell"/>
</dbReference>
<dbReference type="GO" id="GO:0048476">
    <property type="term" value="C:Holliday junction resolvase complex"/>
    <property type="evidence" value="ECO:0007669"/>
    <property type="project" value="UniProtKB-UniRule"/>
</dbReference>
<dbReference type="GO" id="GO:0005524">
    <property type="term" value="F:ATP binding"/>
    <property type="evidence" value="ECO:0007669"/>
    <property type="project" value="UniProtKB-UniRule"/>
</dbReference>
<dbReference type="GO" id="GO:0016887">
    <property type="term" value="F:ATP hydrolysis activity"/>
    <property type="evidence" value="ECO:0007669"/>
    <property type="project" value="InterPro"/>
</dbReference>
<dbReference type="GO" id="GO:0000400">
    <property type="term" value="F:four-way junction DNA binding"/>
    <property type="evidence" value="ECO:0007669"/>
    <property type="project" value="UniProtKB-UniRule"/>
</dbReference>
<dbReference type="GO" id="GO:0009378">
    <property type="term" value="F:four-way junction helicase activity"/>
    <property type="evidence" value="ECO:0007669"/>
    <property type="project" value="InterPro"/>
</dbReference>
<dbReference type="GO" id="GO:0006310">
    <property type="term" value="P:DNA recombination"/>
    <property type="evidence" value="ECO:0007669"/>
    <property type="project" value="UniProtKB-UniRule"/>
</dbReference>
<dbReference type="GO" id="GO:0006281">
    <property type="term" value="P:DNA repair"/>
    <property type="evidence" value="ECO:0007669"/>
    <property type="project" value="UniProtKB-UniRule"/>
</dbReference>
<dbReference type="CDD" id="cd00009">
    <property type="entry name" value="AAA"/>
    <property type="match status" value="1"/>
</dbReference>
<dbReference type="Gene3D" id="1.10.8.60">
    <property type="match status" value="1"/>
</dbReference>
<dbReference type="Gene3D" id="3.40.50.300">
    <property type="entry name" value="P-loop containing nucleotide triphosphate hydrolases"/>
    <property type="match status" value="1"/>
</dbReference>
<dbReference type="Gene3D" id="1.10.10.10">
    <property type="entry name" value="Winged helix-like DNA-binding domain superfamily/Winged helix DNA-binding domain"/>
    <property type="match status" value="1"/>
</dbReference>
<dbReference type="HAMAP" id="MF_00016">
    <property type="entry name" value="DNA_HJ_migration_RuvB"/>
    <property type="match status" value="1"/>
</dbReference>
<dbReference type="InterPro" id="IPR003593">
    <property type="entry name" value="AAA+_ATPase"/>
</dbReference>
<dbReference type="InterPro" id="IPR041445">
    <property type="entry name" value="AAA_lid_4"/>
</dbReference>
<dbReference type="InterPro" id="IPR004605">
    <property type="entry name" value="DNA_helicase_Holl-junc_RuvB"/>
</dbReference>
<dbReference type="InterPro" id="IPR027417">
    <property type="entry name" value="P-loop_NTPase"/>
</dbReference>
<dbReference type="InterPro" id="IPR008824">
    <property type="entry name" value="RuvB-like_N"/>
</dbReference>
<dbReference type="InterPro" id="IPR008823">
    <property type="entry name" value="RuvB_C"/>
</dbReference>
<dbReference type="InterPro" id="IPR036388">
    <property type="entry name" value="WH-like_DNA-bd_sf"/>
</dbReference>
<dbReference type="InterPro" id="IPR036390">
    <property type="entry name" value="WH_DNA-bd_sf"/>
</dbReference>
<dbReference type="NCBIfam" id="NF000868">
    <property type="entry name" value="PRK00080.1"/>
    <property type="match status" value="1"/>
</dbReference>
<dbReference type="NCBIfam" id="TIGR00635">
    <property type="entry name" value="ruvB"/>
    <property type="match status" value="1"/>
</dbReference>
<dbReference type="PANTHER" id="PTHR42848">
    <property type="match status" value="1"/>
</dbReference>
<dbReference type="PANTHER" id="PTHR42848:SF1">
    <property type="entry name" value="HOLLIDAY JUNCTION BRANCH MIGRATION COMPLEX SUBUNIT RUVB"/>
    <property type="match status" value="1"/>
</dbReference>
<dbReference type="Pfam" id="PF17864">
    <property type="entry name" value="AAA_lid_4"/>
    <property type="match status" value="1"/>
</dbReference>
<dbReference type="Pfam" id="PF05491">
    <property type="entry name" value="RuvB_C"/>
    <property type="match status" value="1"/>
</dbReference>
<dbReference type="Pfam" id="PF05496">
    <property type="entry name" value="RuvB_N"/>
    <property type="match status" value="1"/>
</dbReference>
<dbReference type="SMART" id="SM00382">
    <property type="entry name" value="AAA"/>
    <property type="match status" value="1"/>
</dbReference>
<dbReference type="SUPFAM" id="SSF52540">
    <property type="entry name" value="P-loop containing nucleoside triphosphate hydrolases"/>
    <property type="match status" value="1"/>
</dbReference>
<dbReference type="SUPFAM" id="SSF46785">
    <property type="entry name" value="Winged helix' DNA-binding domain"/>
    <property type="match status" value="1"/>
</dbReference>
<protein>
    <recommendedName>
        <fullName evidence="1">Holliday junction branch migration complex subunit RuvB</fullName>
        <ecNumber evidence="1">3.6.4.-</ecNumber>
    </recommendedName>
</protein>
<keyword id="KW-0067">ATP-binding</keyword>
<keyword id="KW-0963">Cytoplasm</keyword>
<keyword id="KW-0227">DNA damage</keyword>
<keyword id="KW-0233">DNA recombination</keyword>
<keyword id="KW-0234">DNA repair</keyword>
<keyword id="KW-0238">DNA-binding</keyword>
<keyword id="KW-0378">Hydrolase</keyword>
<keyword id="KW-0547">Nucleotide-binding</keyword>
<keyword id="KW-1185">Reference proteome</keyword>
<name>RUVB_PSELT</name>
<accession>A8F5R0</accession>
<proteinExistence type="inferred from homology"/>